<gene>
    <name evidence="1" type="primary">ftsB</name>
    <name type="ordered locus">ECSE_3000</name>
</gene>
<comment type="function">
    <text evidence="1">Essential cell division protein. May link together the upstream cell division proteins, which are predominantly cytoplasmic, with the downstream cell division proteins, which are predominantly periplasmic.</text>
</comment>
<comment type="subunit">
    <text evidence="1">Part of a complex composed of FtsB, FtsL and FtsQ.</text>
</comment>
<comment type="subcellular location">
    <subcellularLocation>
        <location evidence="1">Cell inner membrane</location>
        <topology evidence="1">Single-pass type II membrane protein</topology>
    </subcellularLocation>
    <text evidence="1">Localizes to the division septum.</text>
</comment>
<comment type="similarity">
    <text evidence="1">Belongs to the FtsB family.</text>
</comment>
<feature type="chain" id="PRO_1000129928" description="Cell division protein FtsB">
    <location>
        <begin position="1"/>
        <end position="103"/>
    </location>
</feature>
<feature type="topological domain" description="Cytoplasmic" evidence="1">
    <location>
        <begin position="1"/>
        <end position="3"/>
    </location>
</feature>
<feature type="transmembrane region" description="Helical" evidence="1">
    <location>
        <begin position="4"/>
        <end position="21"/>
    </location>
</feature>
<feature type="topological domain" description="Periplasmic" evidence="1">
    <location>
        <begin position="22"/>
        <end position="103"/>
    </location>
</feature>
<feature type="coiled-coil region" evidence="1">
    <location>
        <begin position="31"/>
        <end position="71"/>
    </location>
</feature>
<sequence>MGKLTLLLLAILVWLQYSLWFGKNGIHDYTRVNDDVAAQQATNAKLKARNDQLFAEIDDLNGGQEALEERARNELSMTRPGETFYRLVPDASKRAQSAGQNNR</sequence>
<accession>B6I6D8</accession>
<evidence type="ECO:0000255" key="1">
    <source>
        <dbReference type="HAMAP-Rule" id="MF_00599"/>
    </source>
</evidence>
<protein>
    <recommendedName>
        <fullName evidence="1">Cell division protein FtsB</fullName>
    </recommendedName>
</protein>
<reference key="1">
    <citation type="journal article" date="2008" name="DNA Res.">
        <title>Complete genome sequence and comparative analysis of the wild-type commensal Escherichia coli strain SE11 isolated from a healthy adult.</title>
        <authorList>
            <person name="Oshima K."/>
            <person name="Toh H."/>
            <person name="Ogura Y."/>
            <person name="Sasamoto H."/>
            <person name="Morita H."/>
            <person name="Park S.-H."/>
            <person name="Ooka T."/>
            <person name="Iyoda S."/>
            <person name="Taylor T.D."/>
            <person name="Hayashi T."/>
            <person name="Itoh K."/>
            <person name="Hattori M."/>
        </authorList>
    </citation>
    <scope>NUCLEOTIDE SEQUENCE [LARGE SCALE GENOMIC DNA]</scope>
    <source>
        <strain>SE11</strain>
    </source>
</reference>
<keyword id="KW-0131">Cell cycle</keyword>
<keyword id="KW-0132">Cell division</keyword>
<keyword id="KW-0997">Cell inner membrane</keyword>
<keyword id="KW-1003">Cell membrane</keyword>
<keyword id="KW-0175">Coiled coil</keyword>
<keyword id="KW-0472">Membrane</keyword>
<keyword id="KW-0812">Transmembrane</keyword>
<keyword id="KW-1133">Transmembrane helix</keyword>
<organism>
    <name type="scientific">Escherichia coli (strain SE11)</name>
    <dbReference type="NCBI Taxonomy" id="409438"/>
    <lineage>
        <taxon>Bacteria</taxon>
        <taxon>Pseudomonadati</taxon>
        <taxon>Pseudomonadota</taxon>
        <taxon>Gammaproteobacteria</taxon>
        <taxon>Enterobacterales</taxon>
        <taxon>Enterobacteriaceae</taxon>
        <taxon>Escherichia</taxon>
    </lineage>
</organism>
<dbReference type="EMBL" id="AP009240">
    <property type="protein sequence ID" value="BAG78524.1"/>
    <property type="molecule type" value="Genomic_DNA"/>
</dbReference>
<dbReference type="RefSeq" id="WP_000517476.1">
    <property type="nucleotide sequence ID" value="NC_011415.1"/>
</dbReference>
<dbReference type="SMR" id="B6I6D8"/>
<dbReference type="GeneID" id="93779258"/>
<dbReference type="KEGG" id="ecy:ECSE_3000"/>
<dbReference type="HOGENOM" id="CLU_134863_5_2_6"/>
<dbReference type="Proteomes" id="UP000008199">
    <property type="component" value="Chromosome"/>
</dbReference>
<dbReference type="GO" id="GO:0032153">
    <property type="term" value="C:cell division site"/>
    <property type="evidence" value="ECO:0007669"/>
    <property type="project" value="UniProtKB-UniRule"/>
</dbReference>
<dbReference type="GO" id="GO:0030428">
    <property type="term" value="C:cell septum"/>
    <property type="evidence" value="ECO:0007669"/>
    <property type="project" value="TreeGrafter"/>
</dbReference>
<dbReference type="GO" id="GO:0005886">
    <property type="term" value="C:plasma membrane"/>
    <property type="evidence" value="ECO:0007669"/>
    <property type="project" value="UniProtKB-SubCell"/>
</dbReference>
<dbReference type="GO" id="GO:0043093">
    <property type="term" value="P:FtsZ-dependent cytokinesis"/>
    <property type="evidence" value="ECO:0007669"/>
    <property type="project" value="UniProtKB-UniRule"/>
</dbReference>
<dbReference type="FunFam" id="1.20.5.400:FF:000001">
    <property type="entry name" value="Cell division protein FtsB"/>
    <property type="match status" value="1"/>
</dbReference>
<dbReference type="Gene3D" id="1.20.5.400">
    <property type="match status" value="1"/>
</dbReference>
<dbReference type="HAMAP" id="MF_00599">
    <property type="entry name" value="FtsB"/>
    <property type="match status" value="1"/>
</dbReference>
<dbReference type="InterPro" id="IPR023081">
    <property type="entry name" value="Cell_div_FtsB"/>
</dbReference>
<dbReference type="InterPro" id="IPR007060">
    <property type="entry name" value="FtsL/DivIC"/>
</dbReference>
<dbReference type="NCBIfam" id="NF002058">
    <property type="entry name" value="PRK00888.1"/>
    <property type="match status" value="1"/>
</dbReference>
<dbReference type="PANTHER" id="PTHR37485">
    <property type="entry name" value="CELL DIVISION PROTEIN FTSB"/>
    <property type="match status" value="1"/>
</dbReference>
<dbReference type="PANTHER" id="PTHR37485:SF1">
    <property type="entry name" value="CELL DIVISION PROTEIN FTSB"/>
    <property type="match status" value="1"/>
</dbReference>
<dbReference type="Pfam" id="PF04977">
    <property type="entry name" value="DivIC"/>
    <property type="match status" value="1"/>
</dbReference>
<name>FTSB_ECOSE</name>
<proteinExistence type="inferred from homology"/>